<feature type="signal peptide" evidence="2">
    <location>
        <begin position="1"/>
        <end position="20"/>
    </location>
</feature>
<feature type="chain" id="PRO_0000022531" description="Retinoic acid receptor responder protein 2">
    <location>
        <begin position="21"/>
        <end position="157"/>
    </location>
</feature>
<feature type="propeptide" id="PRO_0000424872" evidence="1">
    <location>
        <begin position="158"/>
        <end position="163"/>
    </location>
</feature>
<feature type="disulfide bond" evidence="1">
    <location>
        <begin position="77"/>
        <end position="87"/>
    </location>
</feature>
<feature type="disulfide bond" evidence="1">
    <location>
        <begin position="98"/>
        <end position="117"/>
    </location>
</feature>
<feature type="disulfide bond" evidence="4">
    <location>
        <begin position="101"/>
        <end position="135"/>
    </location>
</feature>
<proteinExistence type="evidence at transcript level"/>
<accession>Q5R551</accession>
<gene>
    <name type="primary">RARRES2</name>
</gene>
<sequence>MRRLLIPLALWLGAVGVGVAELTEAQRRGLQVALEEFHKHPPVQWAFQETSVESAVDTPFPAGIFVRLEFKLQQTSCRKRDWKKPECKVRPNGRKRKCLACIKLGSEDKVLGRLVHCPIETQVLREPEEHQETQCIRVQRAGEDPHSFYFPGQFAFSKALPRS</sequence>
<protein>
    <recommendedName>
        <fullName>Retinoic acid receptor responder protein 2</fullName>
    </recommendedName>
    <alternativeName>
        <fullName>Chemerin</fullName>
    </alternativeName>
</protein>
<reference key="1">
    <citation type="submission" date="2004-11" db="EMBL/GenBank/DDBJ databases">
        <authorList>
            <consortium name="The German cDNA consortium"/>
        </authorList>
    </citation>
    <scope>NUCLEOTIDE SEQUENCE [LARGE SCALE MRNA]</scope>
    <source>
        <tissue>Liver</tissue>
    </source>
</reference>
<organism>
    <name type="scientific">Pongo abelii</name>
    <name type="common">Sumatran orangutan</name>
    <name type="synonym">Pongo pygmaeus abelii</name>
    <dbReference type="NCBI Taxonomy" id="9601"/>
    <lineage>
        <taxon>Eukaryota</taxon>
        <taxon>Metazoa</taxon>
        <taxon>Chordata</taxon>
        <taxon>Craniata</taxon>
        <taxon>Vertebrata</taxon>
        <taxon>Euteleostomi</taxon>
        <taxon>Mammalia</taxon>
        <taxon>Eutheria</taxon>
        <taxon>Euarchontoglires</taxon>
        <taxon>Primates</taxon>
        <taxon>Haplorrhini</taxon>
        <taxon>Catarrhini</taxon>
        <taxon>Hominidae</taxon>
        <taxon>Pongo</taxon>
    </lineage>
</organism>
<keyword id="KW-0145">Chemotaxis</keyword>
<keyword id="KW-0221">Differentiation</keyword>
<keyword id="KW-1015">Disulfide bond</keyword>
<keyword id="KW-0395">Inflammatory response</keyword>
<keyword id="KW-1185">Reference proteome</keyword>
<keyword id="KW-0964">Secreted</keyword>
<keyword id="KW-0732">Signal</keyword>
<dbReference type="EMBL" id="CR861021">
    <property type="protein sequence ID" value="CAH93115.1"/>
    <property type="molecule type" value="mRNA"/>
</dbReference>
<dbReference type="RefSeq" id="NP_001127631.1">
    <property type="nucleotide sequence ID" value="NM_001134159.1"/>
</dbReference>
<dbReference type="BMRB" id="Q5R551"/>
<dbReference type="SMR" id="Q5R551"/>
<dbReference type="FunCoup" id="Q5R551">
    <property type="interactions" value="65"/>
</dbReference>
<dbReference type="STRING" id="9601.ENSPPYP00000024446"/>
<dbReference type="Ensembl" id="ENSPPYT00000021175.2">
    <property type="protein sequence ID" value="ENSPPYP00000020372.1"/>
    <property type="gene ID" value="ENSPPYG00000018166.3"/>
</dbReference>
<dbReference type="GeneID" id="100174710"/>
<dbReference type="KEGG" id="pon:100174710"/>
<dbReference type="CTD" id="5919"/>
<dbReference type="eggNOG" id="ENOG502SE7C">
    <property type="taxonomic scope" value="Eukaryota"/>
</dbReference>
<dbReference type="GeneTree" id="ENSGT00390000016226"/>
<dbReference type="HOGENOM" id="CLU_138029_0_0_1"/>
<dbReference type="InParanoid" id="Q5R551"/>
<dbReference type="OrthoDB" id="9894305at2759"/>
<dbReference type="TreeFam" id="TF330938"/>
<dbReference type="Proteomes" id="UP000001595">
    <property type="component" value="Chromosome 7"/>
</dbReference>
<dbReference type="GO" id="GO:0031012">
    <property type="term" value="C:extracellular matrix"/>
    <property type="evidence" value="ECO:0007669"/>
    <property type="project" value="TreeGrafter"/>
</dbReference>
<dbReference type="GO" id="GO:0005576">
    <property type="term" value="C:extracellular region"/>
    <property type="evidence" value="ECO:0000250"/>
    <property type="project" value="UniProtKB"/>
</dbReference>
<dbReference type="GO" id="GO:0005615">
    <property type="term" value="C:extracellular space"/>
    <property type="evidence" value="ECO:0007669"/>
    <property type="project" value="TreeGrafter"/>
</dbReference>
<dbReference type="GO" id="GO:0005102">
    <property type="term" value="F:signaling receptor binding"/>
    <property type="evidence" value="ECO:0007669"/>
    <property type="project" value="InterPro"/>
</dbReference>
<dbReference type="GO" id="GO:0030154">
    <property type="term" value="P:cell differentiation"/>
    <property type="evidence" value="ECO:0007669"/>
    <property type="project" value="UniProtKB-KW"/>
</dbReference>
<dbReference type="GO" id="GO:0006935">
    <property type="term" value="P:chemotaxis"/>
    <property type="evidence" value="ECO:0007669"/>
    <property type="project" value="UniProtKB-KW"/>
</dbReference>
<dbReference type="GO" id="GO:0006954">
    <property type="term" value="P:inflammatory response"/>
    <property type="evidence" value="ECO:0007669"/>
    <property type="project" value="UniProtKB-KW"/>
</dbReference>
<dbReference type="GO" id="GO:0045087">
    <property type="term" value="P:innate immune response"/>
    <property type="evidence" value="ECO:0007669"/>
    <property type="project" value="TreeGrafter"/>
</dbReference>
<dbReference type="GO" id="GO:0050921">
    <property type="term" value="P:positive regulation of chemotaxis"/>
    <property type="evidence" value="ECO:0000250"/>
    <property type="project" value="UniProtKB"/>
</dbReference>
<dbReference type="GO" id="GO:0045600">
    <property type="term" value="P:positive regulation of fat cell differentiation"/>
    <property type="evidence" value="ECO:0000250"/>
    <property type="project" value="UniProtKB"/>
</dbReference>
<dbReference type="GO" id="GO:0001934">
    <property type="term" value="P:positive regulation of protein phosphorylation"/>
    <property type="evidence" value="ECO:0000250"/>
    <property type="project" value="UniProtKB"/>
</dbReference>
<dbReference type="GO" id="GO:0046626">
    <property type="term" value="P:regulation of insulin receptor signaling pathway"/>
    <property type="evidence" value="ECO:0000250"/>
    <property type="project" value="UniProtKB"/>
</dbReference>
<dbReference type="GO" id="GO:0050994">
    <property type="term" value="P:regulation of lipid catabolic process"/>
    <property type="evidence" value="ECO:0000250"/>
    <property type="project" value="UniProtKB"/>
</dbReference>
<dbReference type="FunFam" id="3.10.450.10:FF:000014">
    <property type="entry name" value="Retinoic acid receptor responder 2"/>
    <property type="match status" value="1"/>
</dbReference>
<dbReference type="Gene3D" id="3.10.450.10">
    <property type="match status" value="1"/>
</dbReference>
<dbReference type="InterPro" id="IPR029562">
    <property type="entry name" value="Chemerin"/>
</dbReference>
<dbReference type="InterPro" id="IPR046350">
    <property type="entry name" value="Cystatin_sf"/>
</dbReference>
<dbReference type="PANTHER" id="PTHR15106">
    <property type="entry name" value="RETINOIC ACID RECEPTOR RESPONDER PROTEIN 2"/>
    <property type="match status" value="1"/>
</dbReference>
<dbReference type="PANTHER" id="PTHR15106:SF2">
    <property type="entry name" value="RETINOIC ACID RECEPTOR RESPONDER PROTEIN 2"/>
    <property type="match status" value="1"/>
</dbReference>
<dbReference type="SUPFAM" id="SSF54403">
    <property type="entry name" value="Cystatin/monellin"/>
    <property type="match status" value="1"/>
</dbReference>
<name>RARR2_PONAB</name>
<evidence type="ECO:0000250" key="1"/>
<evidence type="ECO:0000250" key="2">
    <source>
        <dbReference type="UniProtKB" id="Q99969"/>
    </source>
</evidence>
<evidence type="ECO:0000250" key="3">
    <source>
        <dbReference type="UniProtKB" id="Q9DD06"/>
    </source>
</evidence>
<evidence type="ECO:0000255" key="4"/>
<comment type="function">
    <text evidence="2">Adipocyte-secreted protein (adipokine) that regulates adipogenesis, metabolism and inflammation through activation of the chemokine-like receptor 1 (CMKLR1). Also acts as a ligand for CMKLR2. Can also bind to C-C chemokine receptor-like 2 (CCRL2), but with a lower affinity than it does to CMKLR1 or CMKLR2. Positively regulates adipocyte differentiation, modulates the expression of adipocyte genes involved in lipid and glucose metabolism and might play a role in angiogenesis, a process essential for the expansion of white adipose tissue. Also acts as a pro-inflammatory adipokine, causing an increase in secretion of pro-inflammatory and prodiabetic adipokines, which further impair adipose tissue metabolic function and have negative systemic effects including impaired insulin sensitivity, altered glucose and lipid metabolism, and a decrease in vascular function in other tissues. Can have both pro- and anti-inflammatory properties depending on the modality of enzymatic cleavage by different classes of proteases. Acts as a chemotactic factor for leukocyte populations expressing CMKLR1, particularly immature plasmacytoid dendritic cells, but also immature myeloid DCs, macrophages and natural killer cells. Exerts an anti-inflammatory role by preventing TNF/TNFA-induced VCAM1 expression and monocytes adhesion in vascular endothelial cells. The effect is mediated via inhibiting activation of NF-kappa-B and CRK/p38 through stimulation of AKT1/NOS3 signaling and nitric oxide production. Exhibits an antimicrobial function in the skin (By similarity).</text>
</comment>
<comment type="subcellular location">
    <subcellularLocation>
        <location evidence="3">Secreted</location>
    </subcellularLocation>
</comment>
<comment type="PTM">
    <text evidence="2">Secreted in an inactive precursor form, prochemerin, which is proteolytically processed by a variety of extracellular proteases to generate forms with differing levels of bioactivity. For example, the removal of six amino acids results in chemerin-157, which exhibits the highest activity, while removal of seven amino acids results in chemerin-156 which has slightly less activity. Some proteases are able to cleave at more than one site and chemerin forms may be sequentially processed by different enzymes to modulate activity levels. The coordinated expression and activity of chemerin-modifying enzymes is essential for regulating its bioactivation, inactivation and, consequently, biological function. Cathepsin G cleaves seven C-terminal amino acids from prochemerin (chemerin-156), elastase is able to cleave six (chemerin-157), eight (chemerin-155) or eleven (chemerin-152), plasmin cleaves five amino acids (chemerin-158), and tryptase cleaves five (chemerin-158) or eight (chemerin-155). Multiple cleavages might be required to fully activate chemerin, with an initial tryptase cleavage resulting in chemerin with low activity (chemerin-158), and a second cleavage by carboxypeptidase N or B producing highly active chemerin (chemerin-157).</text>
</comment>